<keyword id="KW-0028">Amino-acid biosynthesis</keyword>
<keyword id="KW-0100">Branched-chain amino acid biosynthesis</keyword>
<keyword id="KW-0460">Magnesium</keyword>
<keyword id="KW-0479">Metal-binding</keyword>
<keyword id="KW-0521">NADP</keyword>
<keyword id="KW-0560">Oxidoreductase</keyword>
<proteinExistence type="inferred from homology"/>
<accession>Q72M00</accession>
<feature type="chain" id="PRO_0000151320" description="Ketol-acid reductoisomerase (NADP(+))">
    <location>
        <begin position="1"/>
        <end position="333"/>
    </location>
</feature>
<feature type="domain" description="KARI N-terminal Rossmann" evidence="2">
    <location>
        <begin position="2"/>
        <end position="182"/>
    </location>
</feature>
<feature type="domain" description="KARI C-terminal knotted" evidence="3">
    <location>
        <begin position="183"/>
        <end position="331"/>
    </location>
</feature>
<feature type="active site" evidence="1">
    <location>
        <position position="108"/>
    </location>
</feature>
<feature type="binding site" evidence="1">
    <location>
        <begin position="25"/>
        <end position="28"/>
    </location>
    <ligand>
        <name>NADP(+)</name>
        <dbReference type="ChEBI" id="CHEBI:58349"/>
    </ligand>
</feature>
<feature type="binding site" evidence="1">
    <location>
        <position position="48"/>
    </location>
    <ligand>
        <name>NADP(+)</name>
        <dbReference type="ChEBI" id="CHEBI:58349"/>
    </ligand>
</feature>
<feature type="binding site" evidence="1">
    <location>
        <position position="51"/>
    </location>
    <ligand>
        <name>NADP(+)</name>
        <dbReference type="ChEBI" id="CHEBI:58349"/>
    </ligand>
</feature>
<feature type="binding site" evidence="1">
    <location>
        <position position="53"/>
    </location>
    <ligand>
        <name>NADP(+)</name>
        <dbReference type="ChEBI" id="CHEBI:58349"/>
    </ligand>
</feature>
<feature type="binding site" evidence="1">
    <location>
        <begin position="83"/>
        <end position="86"/>
    </location>
    <ligand>
        <name>NADP(+)</name>
        <dbReference type="ChEBI" id="CHEBI:58349"/>
    </ligand>
</feature>
<feature type="binding site" evidence="1">
    <location>
        <position position="134"/>
    </location>
    <ligand>
        <name>NADP(+)</name>
        <dbReference type="ChEBI" id="CHEBI:58349"/>
    </ligand>
</feature>
<feature type="binding site" evidence="1">
    <location>
        <position position="191"/>
    </location>
    <ligand>
        <name>Mg(2+)</name>
        <dbReference type="ChEBI" id="CHEBI:18420"/>
        <label>1</label>
    </ligand>
</feature>
<feature type="binding site" evidence="1">
    <location>
        <position position="191"/>
    </location>
    <ligand>
        <name>Mg(2+)</name>
        <dbReference type="ChEBI" id="CHEBI:18420"/>
        <label>2</label>
    </ligand>
</feature>
<feature type="binding site" evidence="1">
    <location>
        <position position="195"/>
    </location>
    <ligand>
        <name>Mg(2+)</name>
        <dbReference type="ChEBI" id="CHEBI:18420"/>
        <label>1</label>
    </ligand>
</feature>
<feature type="binding site" evidence="1">
    <location>
        <position position="227"/>
    </location>
    <ligand>
        <name>Mg(2+)</name>
        <dbReference type="ChEBI" id="CHEBI:18420"/>
        <label>2</label>
    </ligand>
</feature>
<feature type="binding site" evidence="1">
    <location>
        <position position="231"/>
    </location>
    <ligand>
        <name>Mg(2+)</name>
        <dbReference type="ChEBI" id="CHEBI:18420"/>
        <label>2</label>
    </ligand>
</feature>
<feature type="binding site" evidence="1">
    <location>
        <position position="252"/>
    </location>
    <ligand>
        <name>substrate</name>
    </ligand>
</feature>
<comment type="function">
    <text evidence="1">Involved in the biosynthesis of branched-chain amino acids (BCAA). Catalyzes an alkyl-migration followed by a ketol-acid reduction of (S)-2-acetolactate (S2AL) to yield (R)-2,3-dihydroxy-isovalerate. In the isomerase reaction, S2AL is rearranged via a Mg-dependent methyl migration to produce 3-hydroxy-3-methyl-2-ketobutyrate (HMKB). In the reductase reaction, this 2-ketoacid undergoes a metal-dependent reduction by NADPH to yield (R)-2,3-dihydroxy-isovalerate.</text>
</comment>
<comment type="catalytic activity">
    <reaction evidence="1">
        <text>(2R)-2,3-dihydroxy-3-methylbutanoate + NADP(+) = (2S)-2-acetolactate + NADPH + H(+)</text>
        <dbReference type="Rhea" id="RHEA:22068"/>
        <dbReference type="ChEBI" id="CHEBI:15378"/>
        <dbReference type="ChEBI" id="CHEBI:49072"/>
        <dbReference type="ChEBI" id="CHEBI:57783"/>
        <dbReference type="ChEBI" id="CHEBI:58349"/>
        <dbReference type="ChEBI" id="CHEBI:58476"/>
        <dbReference type="EC" id="1.1.1.86"/>
    </reaction>
</comment>
<comment type="catalytic activity">
    <reaction evidence="1">
        <text>(2R,3R)-2,3-dihydroxy-3-methylpentanoate + NADP(+) = (S)-2-ethyl-2-hydroxy-3-oxobutanoate + NADPH + H(+)</text>
        <dbReference type="Rhea" id="RHEA:13493"/>
        <dbReference type="ChEBI" id="CHEBI:15378"/>
        <dbReference type="ChEBI" id="CHEBI:49256"/>
        <dbReference type="ChEBI" id="CHEBI:49258"/>
        <dbReference type="ChEBI" id="CHEBI:57783"/>
        <dbReference type="ChEBI" id="CHEBI:58349"/>
        <dbReference type="EC" id="1.1.1.86"/>
    </reaction>
</comment>
<comment type="cofactor">
    <cofactor evidence="1">
        <name>Mg(2+)</name>
        <dbReference type="ChEBI" id="CHEBI:18420"/>
    </cofactor>
    <text evidence="1">Binds 2 magnesium ions per subunit.</text>
</comment>
<comment type="pathway">
    <text evidence="1">Amino-acid biosynthesis; L-isoleucine biosynthesis; L-isoleucine from 2-oxobutanoate: step 2/4.</text>
</comment>
<comment type="pathway">
    <text evidence="1">Amino-acid biosynthesis; L-valine biosynthesis; L-valine from pyruvate: step 2/4.</text>
</comment>
<comment type="similarity">
    <text evidence="1">Belongs to the ketol-acid reductoisomerase family.</text>
</comment>
<comment type="sequence caution" evidence="4">
    <conflict type="erroneous initiation">
        <sequence resource="EMBL-CDS" id="AAS71933"/>
    </conflict>
</comment>
<sequence>MANIYYDSDCDLNSLKGKTIAVIGYGSQGHAQAQNMKDSGLKVIIGLKEGSKSIQDAKNAGFEVYSVSEASQKADIIQILAPDTIQADLYKKDIEPNLKKGDALVFSHGFNIHYDFIKPPKEVDVYMVAPKGPGHLVRRVYTEGGGVPCLIAIYQDSSGEAKKRALAHAAGVGGGRAGILETSFREETETDLFGEQVVLCGGLSNLIMAGFETLTEAGYDPEIAYFECLHEVKLITDLIYEGGLARMRFSISDTAEYGDYVSGPRVIDPGVKQRMKEVLNDIQKDKGAKFATNWMAETKAGYPNFKNMRDKNASHPIESVGKKLRSMMKWLSK</sequence>
<protein>
    <recommendedName>
        <fullName evidence="1">Ketol-acid reductoisomerase (NADP(+))</fullName>
        <shortName evidence="1">KARI</shortName>
        <ecNumber evidence="1">1.1.1.86</ecNumber>
    </recommendedName>
    <alternativeName>
        <fullName evidence="1">Acetohydroxy-acid isomeroreductase</fullName>
        <shortName evidence="1">AHIR</shortName>
    </alternativeName>
    <alternativeName>
        <fullName evidence="1">Alpha-keto-beta-hydroxylacyl reductoisomerase</fullName>
    </alternativeName>
    <alternativeName>
        <fullName evidence="1">Ketol-acid reductoisomerase type 1</fullName>
    </alternativeName>
    <alternativeName>
        <fullName evidence="1">Ketol-acid reductoisomerase type I</fullName>
    </alternativeName>
</protein>
<evidence type="ECO:0000255" key="1">
    <source>
        <dbReference type="HAMAP-Rule" id="MF_00435"/>
    </source>
</evidence>
<evidence type="ECO:0000255" key="2">
    <source>
        <dbReference type="PROSITE-ProRule" id="PRU01197"/>
    </source>
</evidence>
<evidence type="ECO:0000255" key="3">
    <source>
        <dbReference type="PROSITE-ProRule" id="PRU01198"/>
    </source>
</evidence>
<evidence type="ECO:0000305" key="4"/>
<organism>
    <name type="scientific">Leptospira interrogans serogroup Icterohaemorrhagiae serovar copenhageni (strain Fiocruz L1-130)</name>
    <dbReference type="NCBI Taxonomy" id="267671"/>
    <lineage>
        <taxon>Bacteria</taxon>
        <taxon>Pseudomonadati</taxon>
        <taxon>Spirochaetota</taxon>
        <taxon>Spirochaetia</taxon>
        <taxon>Leptospirales</taxon>
        <taxon>Leptospiraceae</taxon>
        <taxon>Leptospira</taxon>
    </lineage>
</organism>
<name>ILVC_LEPIC</name>
<gene>
    <name evidence="1" type="primary">ilvC</name>
    <name type="ordered locus">LIC_13393</name>
</gene>
<reference key="1">
    <citation type="journal article" date="2004" name="J. Bacteriol.">
        <title>Comparative genomics of two Leptospira interrogans serovars reveals novel insights into physiology and pathogenesis.</title>
        <authorList>
            <person name="Nascimento A.L.T.O."/>
            <person name="Ko A.I."/>
            <person name="Martins E.A.L."/>
            <person name="Monteiro-Vitorello C.B."/>
            <person name="Ho P.L."/>
            <person name="Haake D.A."/>
            <person name="Verjovski-Almeida S."/>
            <person name="Hartskeerl R.A."/>
            <person name="Marques M.V."/>
            <person name="Oliveira M.C."/>
            <person name="Menck C.F.M."/>
            <person name="Leite L.C.C."/>
            <person name="Carrer H."/>
            <person name="Coutinho L.L."/>
            <person name="Degrave W.M."/>
            <person name="Dellagostin O.A."/>
            <person name="El-Dorry H."/>
            <person name="Ferro E.S."/>
            <person name="Ferro M.I.T."/>
            <person name="Furlan L.R."/>
            <person name="Gamberini M."/>
            <person name="Giglioti E.A."/>
            <person name="Goes-Neto A."/>
            <person name="Goldman G.H."/>
            <person name="Goldman M.H.S."/>
            <person name="Harakava R."/>
            <person name="Jeronimo S.M.B."/>
            <person name="Junqueira-de-Azevedo I.L.M."/>
            <person name="Kimura E.T."/>
            <person name="Kuramae E.E."/>
            <person name="Lemos E.G.M."/>
            <person name="Lemos M.V.F."/>
            <person name="Marino C.L."/>
            <person name="Nunes L.R."/>
            <person name="de Oliveira R.C."/>
            <person name="Pereira G.G."/>
            <person name="Reis M.S."/>
            <person name="Schriefer A."/>
            <person name="Siqueira W.J."/>
            <person name="Sommer P."/>
            <person name="Tsai S.M."/>
            <person name="Simpson A.J.G."/>
            <person name="Ferro J.A."/>
            <person name="Camargo L.E.A."/>
            <person name="Kitajima J.P."/>
            <person name="Setubal J.C."/>
            <person name="Van Sluys M.A."/>
        </authorList>
    </citation>
    <scope>NUCLEOTIDE SEQUENCE [LARGE SCALE GENOMIC DNA]</scope>
    <source>
        <strain>Fiocruz L1-130</strain>
    </source>
</reference>
<dbReference type="EC" id="1.1.1.86" evidence="1"/>
<dbReference type="EMBL" id="AE016823">
    <property type="protein sequence ID" value="AAS71933.1"/>
    <property type="status" value="ALT_INIT"/>
    <property type="molecule type" value="Genomic_DNA"/>
</dbReference>
<dbReference type="RefSeq" id="WP_001284348.1">
    <property type="nucleotide sequence ID" value="NC_005823.1"/>
</dbReference>
<dbReference type="SMR" id="Q72M00"/>
<dbReference type="GeneID" id="61143258"/>
<dbReference type="KEGG" id="lic:LIC_13393"/>
<dbReference type="HOGENOM" id="CLU_033821_0_1_12"/>
<dbReference type="UniPathway" id="UPA00047">
    <property type="reaction ID" value="UER00056"/>
</dbReference>
<dbReference type="UniPathway" id="UPA00049">
    <property type="reaction ID" value="UER00060"/>
</dbReference>
<dbReference type="Proteomes" id="UP000007037">
    <property type="component" value="Chromosome I"/>
</dbReference>
<dbReference type="GO" id="GO:0005829">
    <property type="term" value="C:cytosol"/>
    <property type="evidence" value="ECO:0007669"/>
    <property type="project" value="TreeGrafter"/>
</dbReference>
<dbReference type="GO" id="GO:0004455">
    <property type="term" value="F:ketol-acid reductoisomerase activity"/>
    <property type="evidence" value="ECO:0007669"/>
    <property type="project" value="UniProtKB-UniRule"/>
</dbReference>
<dbReference type="GO" id="GO:0000287">
    <property type="term" value="F:magnesium ion binding"/>
    <property type="evidence" value="ECO:0007669"/>
    <property type="project" value="UniProtKB-UniRule"/>
</dbReference>
<dbReference type="GO" id="GO:0050661">
    <property type="term" value="F:NADP binding"/>
    <property type="evidence" value="ECO:0007669"/>
    <property type="project" value="InterPro"/>
</dbReference>
<dbReference type="GO" id="GO:0009097">
    <property type="term" value="P:isoleucine biosynthetic process"/>
    <property type="evidence" value="ECO:0007669"/>
    <property type="project" value="UniProtKB-UniRule"/>
</dbReference>
<dbReference type="GO" id="GO:0009099">
    <property type="term" value="P:L-valine biosynthetic process"/>
    <property type="evidence" value="ECO:0007669"/>
    <property type="project" value="UniProtKB-UniRule"/>
</dbReference>
<dbReference type="FunFam" id="3.40.50.720:FF:000023">
    <property type="entry name" value="Ketol-acid reductoisomerase (NADP(+))"/>
    <property type="match status" value="1"/>
</dbReference>
<dbReference type="Gene3D" id="6.10.240.10">
    <property type="match status" value="1"/>
</dbReference>
<dbReference type="Gene3D" id="3.40.50.720">
    <property type="entry name" value="NAD(P)-binding Rossmann-like Domain"/>
    <property type="match status" value="1"/>
</dbReference>
<dbReference type="HAMAP" id="MF_00435">
    <property type="entry name" value="IlvC"/>
    <property type="match status" value="1"/>
</dbReference>
<dbReference type="InterPro" id="IPR008927">
    <property type="entry name" value="6-PGluconate_DH-like_C_sf"/>
</dbReference>
<dbReference type="InterPro" id="IPR013023">
    <property type="entry name" value="KARI"/>
</dbReference>
<dbReference type="InterPro" id="IPR000506">
    <property type="entry name" value="KARI_C"/>
</dbReference>
<dbReference type="InterPro" id="IPR013116">
    <property type="entry name" value="KARI_N"/>
</dbReference>
<dbReference type="InterPro" id="IPR014359">
    <property type="entry name" value="KARI_prok"/>
</dbReference>
<dbReference type="InterPro" id="IPR036291">
    <property type="entry name" value="NAD(P)-bd_dom_sf"/>
</dbReference>
<dbReference type="NCBIfam" id="TIGR00465">
    <property type="entry name" value="ilvC"/>
    <property type="match status" value="1"/>
</dbReference>
<dbReference type="NCBIfam" id="NF004017">
    <property type="entry name" value="PRK05479.1"/>
    <property type="match status" value="1"/>
</dbReference>
<dbReference type="NCBIfam" id="NF009940">
    <property type="entry name" value="PRK13403.1"/>
    <property type="match status" value="1"/>
</dbReference>
<dbReference type="PANTHER" id="PTHR21371">
    <property type="entry name" value="KETOL-ACID REDUCTOISOMERASE, MITOCHONDRIAL"/>
    <property type="match status" value="1"/>
</dbReference>
<dbReference type="PANTHER" id="PTHR21371:SF1">
    <property type="entry name" value="KETOL-ACID REDUCTOISOMERASE, MITOCHONDRIAL"/>
    <property type="match status" value="1"/>
</dbReference>
<dbReference type="Pfam" id="PF01450">
    <property type="entry name" value="KARI_C"/>
    <property type="match status" value="1"/>
</dbReference>
<dbReference type="Pfam" id="PF07991">
    <property type="entry name" value="KARI_N"/>
    <property type="match status" value="1"/>
</dbReference>
<dbReference type="PIRSF" id="PIRSF000116">
    <property type="entry name" value="IlvC_gammaproteo"/>
    <property type="match status" value="1"/>
</dbReference>
<dbReference type="SUPFAM" id="SSF48179">
    <property type="entry name" value="6-phosphogluconate dehydrogenase C-terminal domain-like"/>
    <property type="match status" value="1"/>
</dbReference>
<dbReference type="SUPFAM" id="SSF51735">
    <property type="entry name" value="NAD(P)-binding Rossmann-fold domains"/>
    <property type="match status" value="1"/>
</dbReference>
<dbReference type="PROSITE" id="PS51851">
    <property type="entry name" value="KARI_C"/>
    <property type="match status" value="1"/>
</dbReference>
<dbReference type="PROSITE" id="PS51850">
    <property type="entry name" value="KARI_N"/>
    <property type="match status" value="1"/>
</dbReference>